<evidence type="ECO:0000255" key="1">
    <source>
        <dbReference type="HAMAP-Rule" id="MF_01428"/>
    </source>
</evidence>
<dbReference type="EC" id="6.1.1.-" evidence="1"/>
<dbReference type="EMBL" id="CR378673">
    <property type="protein sequence ID" value="CAG21478.1"/>
    <property type="molecule type" value="Genomic_DNA"/>
</dbReference>
<dbReference type="SMR" id="Q6LMJ9"/>
<dbReference type="STRING" id="298386.PBPRA3172"/>
<dbReference type="KEGG" id="ppr:PBPRA3172"/>
<dbReference type="eggNOG" id="COG0008">
    <property type="taxonomic scope" value="Bacteria"/>
</dbReference>
<dbReference type="HOGENOM" id="CLU_015768_0_1_6"/>
<dbReference type="Proteomes" id="UP000000593">
    <property type="component" value="Chromosome 1"/>
</dbReference>
<dbReference type="GO" id="GO:0005829">
    <property type="term" value="C:cytosol"/>
    <property type="evidence" value="ECO:0007669"/>
    <property type="project" value="TreeGrafter"/>
</dbReference>
<dbReference type="GO" id="GO:0005524">
    <property type="term" value="F:ATP binding"/>
    <property type="evidence" value="ECO:0007669"/>
    <property type="project" value="UniProtKB-KW"/>
</dbReference>
<dbReference type="GO" id="GO:0004818">
    <property type="term" value="F:glutamate-tRNA ligase activity"/>
    <property type="evidence" value="ECO:0007669"/>
    <property type="project" value="TreeGrafter"/>
</dbReference>
<dbReference type="GO" id="GO:0008270">
    <property type="term" value="F:zinc ion binding"/>
    <property type="evidence" value="ECO:0007669"/>
    <property type="project" value="UniProtKB-UniRule"/>
</dbReference>
<dbReference type="GO" id="GO:0006424">
    <property type="term" value="P:glutamyl-tRNA aminoacylation"/>
    <property type="evidence" value="ECO:0007669"/>
    <property type="project" value="InterPro"/>
</dbReference>
<dbReference type="GO" id="GO:0006400">
    <property type="term" value="P:tRNA modification"/>
    <property type="evidence" value="ECO:0007669"/>
    <property type="project" value="InterPro"/>
</dbReference>
<dbReference type="FunFam" id="3.40.50.620:FF:000093">
    <property type="entry name" value="Glutamyl-Q tRNA(Asp) synthetase"/>
    <property type="match status" value="1"/>
</dbReference>
<dbReference type="Gene3D" id="3.40.50.620">
    <property type="entry name" value="HUPs"/>
    <property type="match status" value="1"/>
</dbReference>
<dbReference type="HAMAP" id="MF_01428">
    <property type="entry name" value="Glu_Q_tRNA_synth"/>
    <property type="match status" value="1"/>
</dbReference>
<dbReference type="InterPro" id="IPR022380">
    <property type="entry name" value="Glu-Q_tRNA(Asp)_Synthase"/>
</dbReference>
<dbReference type="InterPro" id="IPR000924">
    <property type="entry name" value="Glu/Gln-tRNA-synth"/>
</dbReference>
<dbReference type="InterPro" id="IPR020058">
    <property type="entry name" value="Glu/Gln-tRNA-synth_Ib_cat-dom"/>
</dbReference>
<dbReference type="InterPro" id="IPR049940">
    <property type="entry name" value="GluQ/Sye"/>
</dbReference>
<dbReference type="InterPro" id="IPR014729">
    <property type="entry name" value="Rossmann-like_a/b/a_fold"/>
</dbReference>
<dbReference type="NCBIfam" id="NF004314">
    <property type="entry name" value="PRK05710.1-3"/>
    <property type="match status" value="1"/>
</dbReference>
<dbReference type="NCBIfam" id="TIGR03838">
    <property type="entry name" value="queuosine_YadB"/>
    <property type="match status" value="1"/>
</dbReference>
<dbReference type="PANTHER" id="PTHR43311">
    <property type="entry name" value="GLUTAMATE--TRNA LIGASE"/>
    <property type="match status" value="1"/>
</dbReference>
<dbReference type="PANTHER" id="PTHR43311:SF1">
    <property type="entry name" value="GLUTAMYL-Q TRNA(ASP) SYNTHETASE"/>
    <property type="match status" value="1"/>
</dbReference>
<dbReference type="Pfam" id="PF00749">
    <property type="entry name" value="tRNA-synt_1c"/>
    <property type="match status" value="1"/>
</dbReference>
<dbReference type="PRINTS" id="PR00987">
    <property type="entry name" value="TRNASYNTHGLU"/>
</dbReference>
<dbReference type="SUPFAM" id="SSF52374">
    <property type="entry name" value="Nucleotidylyl transferase"/>
    <property type="match status" value="1"/>
</dbReference>
<comment type="function">
    <text evidence="1">Catalyzes the tRNA-independent activation of glutamate in presence of ATP and the subsequent transfer of glutamate onto a tRNA(Asp). Glutamate is transferred on the 2-amino-5-(4,5-dihydroxy-2-cyclopenten-1-yl) moiety of the queuosine in the wobble position of the QUC anticodon.</text>
</comment>
<comment type="cofactor">
    <cofactor evidence="1">
        <name>Zn(2+)</name>
        <dbReference type="ChEBI" id="CHEBI:29105"/>
    </cofactor>
    <text evidence="1">Binds 1 zinc ion per subunit.</text>
</comment>
<comment type="similarity">
    <text evidence="1">Belongs to the class-I aminoacyl-tRNA synthetase family. GluQ subfamily.</text>
</comment>
<protein>
    <recommendedName>
        <fullName evidence="1">Glutamyl-Q tRNA(Asp) synthetase</fullName>
        <shortName evidence="1">Glu-Q-RSs</shortName>
        <ecNumber evidence="1">6.1.1.-</ecNumber>
    </recommendedName>
</protein>
<keyword id="KW-0030">Aminoacyl-tRNA synthetase</keyword>
<keyword id="KW-0067">ATP-binding</keyword>
<keyword id="KW-0436">Ligase</keyword>
<keyword id="KW-0479">Metal-binding</keyword>
<keyword id="KW-0547">Nucleotide-binding</keyword>
<keyword id="KW-1185">Reference proteome</keyword>
<keyword id="KW-0862">Zinc</keyword>
<reference key="1">
    <citation type="journal article" date="2005" name="Science">
        <title>Life at depth: Photobacterium profundum genome sequence and expression analysis.</title>
        <authorList>
            <person name="Vezzi A."/>
            <person name="Campanaro S."/>
            <person name="D'Angelo M."/>
            <person name="Simonato F."/>
            <person name="Vitulo N."/>
            <person name="Lauro F.M."/>
            <person name="Cestaro A."/>
            <person name="Malacrida G."/>
            <person name="Simionati B."/>
            <person name="Cannata N."/>
            <person name="Romualdi C."/>
            <person name="Bartlett D.H."/>
            <person name="Valle G."/>
        </authorList>
    </citation>
    <scope>NUCLEOTIDE SEQUENCE [LARGE SCALE GENOMIC DNA]</scope>
    <source>
        <strain>ATCC BAA-1253 / SS9</strain>
    </source>
</reference>
<name>GLUQ_PHOPR</name>
<sequence length="310" mass="34823">MGIFSRLQSLFNVFMTTDTHYVGRFAPSPSGPLHFGSLIAALGSYLQARSQQGKWLVRIEDLDPPREIRGAADDILRTLEAYGLTWDGSVMYQSQRHGAYQDQIDQWLHGGDAYYCQCTRKQIKTAGGFYPGTCRHLHRSAENSAVRLNVDTPITYFVDRLHGQIDIPATLAQEDFIIRRRDGLYAYNLAVVLDDIEQNITEVVRGADLIEPTGRQIGLYRQLQHPEVSYLHLPLAVTDNGNKLSKQNHAPAIDKSHPVPALIAAMSFLGMTPPATLIKEELKDVLQWGINAWCIDNLPKMTEIILTKTH</sequence>
<feature type="chain" id="PRO_0000208310" description="Glutamyl-Q tRNA(Asp) synthetase">
    <location>
        <begin position="1"/>
        <end position="310"/>
    </location>
</feature>
<feature type="short sequence motif" description="'HIGH' region">
    <location>
        <begin position="27"/>
        <end position="37"/>
    </location>
</feature>
<feature type="short sequence motif" description="'KMSKS' region">
    <location>
        <begin position="243"/>
        <end position="247"/>
    </location>
</feature>
<feature type="binding site" evidence="1">
    <location>
        <begin position="24"/>
        <end position="28"/>
    </location>
    <ligand>
        <name>L-glutamate</name>
        <dbReference type="ChEBI" id="CHEBI:29985"/>
    </ligand>
</feature>
<feature type="binding site" evidence="1">
    <location>
        <position position="60"/>
    </location>
    <ligand>
        <name>L-glutamate</name>
        <dbReference type="ChEBI" id="CHEBI:29985"/>
    </ligand>
</feature>
<feature type="binding site" evidence="1">
    <location>
        <position position="116"/>
    </location>
    <ligand>
        <name>Zn(2+)</name>
        <dbReference type="ChEBI" id="CHEBI:29105"/>
    </ligand>
</feature>
<feature type="binding site" evidence="1">
    <location>
        <position position="118"/>
    </location>
    <ligand>
        <name>Zn(2+)</name>
        <dbReference type="ChEBI" id="CHEBI:29105"/>
    </ligand>
</feature>
<feature type="binding site" evidence="1">
    <location>
        <position position="130"/>
    </location>
    <ligand>
        <name>Zn(2+)</name>
        <dbReference type="ChEBI" id="CHEBI:29105"/>
    </ligand>
</feature>
<feature type="binding site" evidence="1">
    <location>
        <position position="134"/>
    </location>
    <ligand>
        <name>Zn(2+)</name>
        <dbReference type="ChEBI" id="CHEBI:29105"/>
    </ligand>
</feature>
<feature type="binding site" evidence="1">
    <location>
        <position position="187"/>
    </location>
    <ligand>
        <name>L-glutamate</name>
        <dbReference type="ChEBI" id="CHEBI:29985"/>
    </ligand>
</feature>
<feature type="binding site" evidence="1">
    <location>
        <position position="205"/>
    </location>
    <ligand>
        <name>L-glutamate</name>
        <dbReference type="ChEBI" id="CHEBI:29985"/>
    </ligand>
</feature>
<feature type="binding site" evidence="1">
    <location>
        <position position="246"/>
    </location>
    <ligand>
        <name>ATP</name>
        <dbReference type="ChEBI" id="CHEBI:30616"/>
    </ligand>
</feature>
<accession>Q6LMJ9</accession>
<organism>
    <name type="scientific">Photobacterium profundum (strain SS9)</name>
    <dbReference type="NCBI Taxonomy" id="298386"/>
    <lineage>
        <taxon>Bacteria</taxon>
        <taxon>Pseudomonadati</taxon>
        <taxon>Pseudomonadota</taxon>
        <taxon>Gammaproteobacteria</taxon>
        <taxon>Vibrionales</taxon>
        <taxon>Vibrionaceae</taxon>
        <taxon>Photobacterium</taxon>
    </lineage>
</organism>
<proteinExistence type="inferred from homology"/>
<gene>
    <name evidence="1" type="primary">gluQ</name>
    <name type="ordered locus">PBPRA3172</name>
</gene>